<evidence type="ECO:0000250" key="1"/>
<evidence type="ECO:0000256" key="2">
    <source>
        <dbReference type="SAM" id="MobiDB-lite"/>
    </source>
</evidence>
<evidence type="ECO:0000305" key="3"/>
<keyword id="KW-0647">Proteasome</keyword>
<keyword id="KW-1185">Reference proteome</keyword>
<keyword id="KW-0677">Repeat</keyword>
<reference key="1">
    <citation type="journal article" date="2005" name="Nature">
        <title>The genome of the social amoeba Dictyostelium discoideum.</title>
        <authorList>
            <person name="Eichinger L."/>
            <person name="Pachebat J.A."/>
            <person name="Gloeckner G."/>
            <person name="Rajandream M.A."/>
            <person name="Sucgang R."/>
            <person name="Berriman M."/>
            <person name="Song J."/>
            <person name="Olsen R."/>
            <person name="Szafranski K."/>
            <person name="Xu Q."/>
            <person name="Tunggal B."/>
            <person name="Kummerfeld S."/>
            <person name="Madera M."/>
            <person name="Konfortov B.A."/>
            <person name="Rivero F."/>
            <person name="Bankier A.T."/>
            <person name="Lehmann R."/>
            <person name="Hamlin N."/>
            <person name="Davies R."/>
            <person name="Gaudet P."/>
            <person name="Fey P."/>
            <person name="Pilcher K."/>
            <person name="Chen G."/>
            <person name="Saunders D."/>
            <person name="Sodergren E.J."/>
            <person name="Davis P."/>
            <person name="Kerhornou A."/>
            <person name="Nie X."/>
            <person name="Hall N."/>
            <person name="Anjard C."/>
            <person name="Hemphill L."/>
            <person name="Bason N."/>
            <person name="Farbrother P."/>
            <person name="Desany B."/>
            <person name="Just E."/>
            <person name="Morio T."/>
            <person name="Rost R."/>
            <person name="Churcher C.M."/>
            <person name="Cooper J."/>
            <person name="Haydock S."/>
            <person name="van Driessche N."/>
            <person name="Cronin A."/>
            <person name="Goodhead I."/>
            <person name="Muzny D.M."/>
            <person name="Mourier T."/>
            <person name="Pain A."/>
            <person name="Lu M."/>
            <person name="Harper D."/>
            <person name="Lindsay R."/>
            <person name="Hauser H."/>
            <person name="James K.D."/>
            <person name="Quiles M."/>
            <person name="Madan Babu M."/>
            <person name="Saito T."/>
            <person name="Buchrieser C."/>
            <person name="Wardroper A."/>
            <person name="Felder M."/>
            <person name="Thangavelu M."/>
            <person name="Johnson D."/>
            <person name="Knights A."/>
            <person name="Loulseged H."/>
            <person name="Mungall K.L."/>
            <person name="Oliver K."/>
            <person name="Price C."/>
            <person name="Quail M.A."/>
            <person name="Urushihara H."/>
            <person name="Hernandez J."/>
            <person name="Rabbinowitsch E."/>
            <person name="Steffen D."/>
            <person name="Sanders M."/>
            <person name="Ma J."/>
            <person name="Kohara Y."/>
            <person name="Sharp S."/>
            <person name="Simmonds M.N."/>
            <person name="Spiegler S."/>
            <person name="Tivey A."/>
            <person name="Sugano S."/>
            <person name="White B."/>
            <person name="Walker D."/>
            <person name="Woodward J.R."/>
            <person name="Winckler T."/>
            <person name="Tanaka Y."/>
            <person name="Shaulsky G."/>
            <person name="Schleicher M."/>
            <person name="Weinstock G.M."/>
            <person name="Rosenthal A."/>
            <person name="Cox E.C."/>
            <person name="Chisholm R.L."/>
            <person name="Gibbs R.A."/>
            <person name="Loomis W.F."/>
            <person name="Platzer M."/>
            <person name="Kay R.R."/>
            <person name="Williams J.G."/>
            <person name="Dear P.H."/>
            <person name="Noegel A.A."/>
            <person name="Barrell B.G."/>
            <person name="Kuspa A."/>
        </authorList>
    </citation>
    <scope>NUCLEOTIDE SEQUENCE [LARGE SCALE GENOMIC DNA]</scope>
    <source>
        <strain>AX4</strain>
    </source>
</reference>
<reference key="2">
    <citation type="journal article" date="2006" name="J. Proteome Res.">
        <title>Identification of novel centrosomal proteins in Dictyostelium discoideum by comparative proteomic approaches.</title>
        <authorList>
            <person name="Reinders Y."/>
            <person name="Schulz I."/>
            <person name="Graef R."/>
            <person name="Sickmann A."/>
        </authorList>
    </citation>
    <scope>IDENTIFICATION BY MASS SPECTROMETRY [LARGE SCALE ANALYSIS]</scope>
</reference>
<feature type="chain" id="PRO_0000327453" description="26S proteasome non-ATPase regulatory subunit 1">
    <location>
        <begin position="1"/>
        <end position="975"/>
    </location>
</feature>
<feature type="repeat" description="PC 1">
    <location>
        <begin position="393"/>
        <end position="426"/>
    </location>
</feature>
<feature type="repeat" description="PC 2">
    <location>
        <begin position="431"/>
        <end position="464"/>
    </location>
</feature>
<feature type="repeat" description="PC 3">
    <location>
        <begin position="465"/>
        <end position="499"/>
    </location>
</feature>
<feature type="repeat" description="PC 4">
    <location>
        <begin position="500"/>
        <end position="534"/>
    </location>
</feature>
<feature type="repeat" description="PC 5">
    <location>
        <begin position="536"/>
        <end position="569"/>
    </location>
</feature>
<feature type="repeat" description="PC 6">
    <location>
        <begin position="570"/>
        <end position="605"/>
    </location>
</feature>
<feature type="repeat" description="PC 7">
    <location>
        <begin position="606"/>
        <end position="638"/>
    </location>
</feature>
<feature type="repeat" description="PC 8">
    <location>
        <begin position="640"/>
        <end position="674"/>
    </location>
</feature>
<feature type="repeat" description="PC 9">
    <location>
        <begin position="675"/>
        <end position="715"/>
    </location>
</feature>
<feature type="repeat" description="PC 10">
    <location>
        <begin position="718"/>
        <end position="748"/>
    </location>
</feature>
<feature type="region of interest" description="Disordered" evidence="2">
    <location>
        <begin position="272"/>
        <end position="303"/>
    </location>
</feature>
<feature type="region of interest" description="Disordered" evidence="2">
    <location>
        <begin position="832"/>
        <end position="882"/>
    </location>
</feature>
<feature type="region of interest" description="Disordered" evidence="2">
    <location>
        <begin position="922"/>
        <end position="975"/>
    </location>
</feature>
<feature type="compositionally biased region" description="Basic and acidic residues" evidence="2">
    <location>
        <begin position="842"/>
        <end position="880"/>
    </location>
</feature>
<feature type="compositionally biased region" description="Basic and acidic residues" evidence="2">
    <location>
        <begin position="926"/>
        <end position="935"/>
    </location>
</feature>
<feature type="compositionally biased region" description="Low complexity" evidence="2">
    <location>
        <begin position="944"/>
        <end position="961"/>
    </location>
</feature>
<organism>
    <name type="scientific">Dictyostelium discoideum</name>
    <name type="common">Social amoeba</name>
    <dbReference type="NCBI Taxonomy" id="44689"/>
    <lineage>
        <taxon>Eukaryota</taxon>
        <taxon>Amoebozoa</taxon>
        <taxon>Evosea</taxon>
        <taxon>Eumycetozoa</taxon>
        <taxon>Dictyostelia</taxon>
        <taxon>Dictyosteliales</taxon>
        <taxon>Dictyosteliaceae</taxon>
        <taxon>Dictyostelium</taxon>
    </lineage>
</organism>
<comment type="function">
    <text evidence="1">Acts as a regulatory subunit of the 26 proteasome which is involved in the ATP-dependent degradation of ubiquitinated proteins.</text>
</comment>
<comment type="similarity">
    <text evidence="3">Belongs to the proteasome subunit S1 family.</text>
</comment>
<gene>
    <name type="primary">psmD1</name>
    <name type="ORF">DDB_G0287953</name>
</gene>
<name>PSMD1_DICDI</name>
<accession>Q54JM5</accession>
<proteinExistence type="evidence at protein level"/>
<dbReference type="EMBL" id="AAFI02000105">
    <property type="protein sequence ID" value="EAL63468.1"/>
    <property type="molecule type" value="Genomic_DNA"/>
</dbReference>
<dbReference type="RefSeq" id="XP_636972.1">
    <property type="nucleotide sequence ID" value="XM_631880.1"/>
</dbReference>
<dbReference type="SMR" id="Q54JM5"/>
<dbReference type="BioGRID" id="1251384">
    <property type="interactions" value="1"/>
</dbReference>
<dbReference type="FunCoup" id="Q54JM5">
    <property type="interactions" value="1319"/>
</dbReference>
<dbReference type="IntAct" id="Q54JM5">
    <property type="interactions" value="1"/>
</dbReference>
<dbReference type="STRING" id="44689.Q54JM5"/>
<dbReference type="PaxDb" id="44689-DDB0232977"/>
<dbReference type="EnsemblProtists" id="EAL63468">
    <property type="protein sequence ID" value="EAL63468"/>
    <property type="gene ID" value="DDB_G0287953"/>
</dbReference>
<dbReference type="GeneID" id="8626381"/>
<dbReference type="KEGG" id="ddi:DDB_G0287953"/>
<dbReference type="dictyBase" id="DDB_G0287953">
    <property type="gene designation" value="psmD1"/>
</dbReference>
<dbReference type="VEuPathDB" id="AmoebaDB:DDB_G0287953"/>
<dbReference type="eggNOG" id="KOG2062">
    <property type="taxonomic scope" value="Eukaryota"/>
</dbReference>
<dbReference type="HOGENOM" id="CLU_002323_0_0_1"/>
<dbReference type="InParanoid" id="Q54JM5"/>
<dbReference type="OMA" id="IMFGRQE"/>
<dbReference type="PhylomeDB" id="Q54JM5"/>
<dbReference type="Reactome" id="R-DDI-1236978">
    <property type="pathway name" value="Cross-presentation of soluble exogenous antigens (endosomes)"/>
</dbReference>
<dbReference type="Reactome" id="R-DDI-174084">
    <property type="pathway name" value="Autodegradation of Cdh1 by Cdh1:APC/C"/>
</dbReference>
<dbReference type="Reactome" id="R-DDI-174154">
    <property type="pathway name" value="APC/C:Cdc20 mediated degradation of Securin"/>
</dbReference>
<dbReference type="Reactome" id="R-DDI-174178">
    <property type="pathway name" value="APC/C:Cdh1 mediated degradation of Cdc20 and other APC/C:Cdh1 targeted proteins in late mitosis/early G1"/>
</dbReference>
<dbReference type="Reactome" id="R-DDI-2467813">
    <property type="pathway name" value="Separation of Sister Chromatids"/>
</dbReference>
<dbReference type="Reactome" id="R-DDI-349425">
    <property type="pathway name" value="Autodegradation of the E3 ubiquitin ligase COP1"/>
</dbReference>
<dbReference type="Reactome" id="R-DDI-382556">
    <property type="pathway name" value="ABC-family proteins mediated transport"/>
</dbReference>
<dbReference type="Reactome" id="R-DDI-450408">
    <property type="pathway name" value="AUF1 (hnRNP D0) binds and destabilizes mRNA"/>
</dbReference>
<dbReference type="Reactome" id="R-DDI-4641258">
    <property type="pathway name" value="Degradation of DVL"/>
</dbReference>
<dbReference type="Reactome" id="R-DDI-5632684">
    <property type="pathway name" value="Hedgehog 'on' state"/>
</dbReference>
<dbReference type="Reactome" id="R-DDI-5658442">
    <property type="pathway name" value="Regulation of RAS by GAPs"/>
</dbReference>
<dbReference type="Reactome" id="R-DDI-5687128">
    <property type="pathway name" value="MAPK6/MAPK4 signaling"/>
</dbReference>
<dbReference type="Reactome" id="R-DDI-5689603">
    <property type="pathway name" value="UCH proteinases"/>
</dbReference>
<dbReference type="Reactome" id="R-DDI-5689880">
    <property type="pathway name" value="Ub-specific processing proteases"/>
</dbReference>
<dbReference type="Reactome" id="R-DDI-6798695">
    <property type="pathway name" value="Neutrophil degranulation"/>
</dbReference>
<dbReference type="Reactome" id="R-DDI-68949">
    <property type="pathway name" value="Orc1 removal from chromatin"/>
</dbReference>
<dbReference type="Reactome" id="R-DDI-69017">
    <property type="pathway name" value="CDK-mediated phosphorylation and removal of Cdc6"/>
</dbReference>
<dbReference type="Reactome" id="R-DDI-69601">
    <property type="pathway name" value="Ubiquitin Mediated Degradation of Phosphorylated Cdc25A"/>
</dbReference>
<dbReference type="Reactome" id="R-DDI-8854050">
    <property type="pathway name" value="FBXL7 down-regulates AURKA during mitotic entry and in early mitosis"/>
</dbReference>
<dbReference type="Reactome" id="R-DDI-8948751">
    <property type="pathway name" value="Regulation of PTEN stability and activity"/>
</dbReference>
<dbReference type="Reactome" id="R-DDI-8951664">
    <property type="pathway name" value="Neddylation"/>
</dbReference>
<dbReference type="Reactome" id="R-DDI-9755511">
    <property type="pathway name" value="KEAP1-NFE2L2 pathway"/>
</dbReference>
<dbReference type="Reactome" id="R-DDI-983168">
    <property type="pathway name" value="Antigen processing: Ubiquitination &amp; Proteasome degradation"/>
</dbReference>
<dbReference type="Reactome" id="R-DDI-9907900">
    <property type="pathway name" value="Proteasome assembly"/>
</dbReference>
<dbReference type="PRO" id="PR:Q54JM5"/>
<dbReference type="Proteomes" id="UP000002195">
    <property type="component" value="Chromosome 5"/>
</dbReference>
<dbReference type="GO" id="GO:0005776">
    <property type="term" value="C:autophagosome"/>
    <property type="evidence" value="ECO:0000314"/>
    <property type="project" value="dictyBase"/>
</dbReference>
<dbReference type="GO" id="GO:0005764">
    <property type="term" value="C:lysosome"/>
    <property type="evidence" value="ECO:0000314"/>
    <property type="project" value="dictyBase"/>
</dbReference>
<dbReference type="GO" id="GO:0005634">
    <property type="term" value="C:nucleus"/>
    <property type="evidence" value="ECO:0000250"/>
    <property type="project" value="dictyBase"/>
</dbReference>
<dbReference type="GO" id="GO:0008540">
    <property type="term" value="C:proteasome regulatory particle, base subcomplex"/>
    <property type="evidence" value="ECO:0000318"/>
    <property type="project" value="GO_Central"/>
</dbReference>
<dbReference type="GO" id="GO:0034515">
    <property type="term" value="C:proteasome storage granule"/>
    <property type="evidence" value="ECO:0000318"/>
    <property type="project" value="GO_Central"/>
</dbReference>
<dbReference type="GO" id="GO:0004175">
    <property type="term" value="F:endopeptidase activity"/>
    <property type="evidence" value="ECO:0000250"/>
    <property type="project" value="dictyBase"/>
</dbReference>
<dbReference type="GO" id="GO:0030234">
    <property type="term" value="F:enzyme regulator activity"/>
    <property type="evidence" value="ECO:0007669"/>
    <property type="project" value="InterPro"/>
</dbReference>
<dbReference type="GO" id="GO:0043161">
    <property type="term" value="P:proteasome-mediated ubiquitin-dependent protein catabolic process"/>
    <property type="evidence" value="ECO:0000318"/>
    <property type="project" value="GO_Central"/>
</dbReference>
<dbReference type="GO" id="GO:0042176">
    <property type="term" value="P:regulation of protein catabolic process"/>
    <property type="evidence" value="ECO:0007669"/>
    <property type="project" value="InterPro"/>
</dbReference>
<dbReference type="GO" id="GO:0006511">
    <property type="term" value="P:ubiquitin-dependent protein catabolic process"/>
    <property type="evidence" value="ECO:0000250"/>
    <property type="project" value="dictyBase"/>
</dbReference>
<dbReference type="FunFam" id="1.25.10.10:FF:000017">
    <property type="entry name" value="26S proteasome non-ATPase regulatory subunit 1"/>
    <property type="match status" value="1"/>
</dbReference>
<dbReference type="Gene3D" id="1.25.10.10">
    <property type="entry name" value="Leucine-rich Repeat Variant"/>
    <property type="match status" value="1"/>
</dbReference>
<dbReference type="InterPro" id="IPR016642">
    <property type="entry name" value="26S_Psome_Rpn2"/>
</dbReference>
<dbReference type="InterPro" id="IPR011989">
    <property type="entry name" value="ARM-like"/>
</dbReference>
<dbReference type="InterPro" id="IPR016024">
    <property type="entry name" value="ARM-type_fold"/>
</dbReference>
<dbReference type="InterPro" id="IPR002015">
    <property type="entry name" value="Proteasome/cyclosome_rpt"/>
</dbReference>
<dbReference type="InterPro" id="IPR048570">
    <property type="entry name" value="PSMD1_RPN2_N"/>
</dbReference>
<dbReference type="InterPro" id="IPR040623">
    <property type="entry name" value="RPN2_C"/>
</dbReference>
<dbReference type="PANTHER" id="PTHR10943">
    <property type="entry name" value="26S PROTEASOME NON-ATPASE REGULATORY SUBUNIT"/>
    <property type="match status" value="1"/>
</dbReference>
<dbReference type="PANTHER" id="PTHR10943:SF2">
    <property type="entry name" value="26S PROTEASOME NON-ATPASE REGULATORY SUBUNIT 1"/>
    <property type="match status" value="1"/>
</dbReference>
<dbReference type="Pfam" id="PF13646">
    <property type="entry name" value="HEAT_2"/>
    <property type="match status" value="1"/>
</dbReference>
<dbReference type="Pfam" id="PF01851">
    <property type="entry name" value="PC_rep"/>
    <property type="match status" value="2"/>
</dbReference>
<dbReference type="Pfam" id="PF18004">
    <property type="entry name" value="RPN2_C"/>
    <property type="match status" value="1"/>
</dbReference>
<dbReference type="Pfam" id="PF21505">
    <property type="entry name" value="RPN2_N"/>
    <property type="match status" value="1"/>
</dbReference>
<dbReference type="PIRSF" id="PIRSF015947">
    <property type="entry name" value="26S_Psome_Rpn2"/>
    <property type="match status" value="1"/>
</dbReference>
<dbReference type="SUPFAM" id="SSF48371">
    <property type="entry name" value="ARM repeat"/>
    <property type="match status" value="1"/>
</dbReference>
<sequence length="975" mass="107938">MVAINSVSNYLSLLDEDQLELKSYSLEKLDSCVDEFWSEIASSSIDKIKSLSVNKQFPKHELASLVLSKVYYNLSDFPNSMEYALSAGSLFNVLSKSEYIETLLYKFIDEYIKLRTSTNKDTVINPHLESIVMGMFDRCFKEGSYKQALGIAIEARRLDIIEKAISQSGNVNSMLSYCLHICNVSVNNRHFRHSVLGILVNLHLAQEKPDYLSVVQCLIFLDNHIEVATILLSLIKKDEESLLLAYQIGFDLFQNSTQQFLLNVRNRLPPVEKKSTTTTTTTPASDSMEIDIDSGNEKSGGSSSFEQRLERLHSILIGDVSIGMNLEFLYRNCSTDMHILQSMKTTSELHKGAIFYSGTLFANALMHAGTTRDTFLRSNIEWLYKSTHWTKFSAISSLGVINKGHIKESKSLLKTYLPGASVNQTPYSESGSLYALGLIHASHGEEIIDYLVEKLHINNAILHHGASLGLGLAAMATGRDDLYEDLKSVLYNDDAVSGEAAGLAMGLVMLGSGAKKAIEEMLAYAHETQHEKTIRSLSMGLAFLMYGKEESADTLIEQMIGDKDPLIRYGGMYAIAFAYCGTGHNDALRKLLHVAVSDGTDSVRRAAVTCIGFVLSRQPEKCPKAIALLAESYNPHVRYGAAFALGIACAGTGQRDALEILKSLTTDSVGYVKQAAWISMAMVLIQTSKELVPEAETARKLFATCISDKREDSMSKFGAVLAFGVIDAGGRNSTIQLHSPSGHKNMNAIVGIAGFLQFWYWFPMTHFMGLALTPTSIIGLNKNLEMPVFTFKSNCRPSLFAYPPETKPSTTSSTNKIETAILSYSRKNKLQSSRSAMNIDQDVEKKEKEEKEAKEKEAKEKEEKEAAKAEEKEPLFERKSNPARIVPRQLQYVQFDDARYQPIKKSPAIGIVMLRDLTPNEPEQLVVKEKPETKQETVGNQSGTATATASLPNATTTTSPTLPEPSTPEPFEFTE</sequence>
<protein>
    <recommendedName>
        <fullName>26S proteasome non-ATPase regulatory subunit 1</fullName>
    </recommendedName>
</protein>